<reference key="1">
    <citation type="journal article" date="2004" name="Genome Res.">
        <title>The complete genome and proteome of Mycoplasma mobile.</title>
        <authorList>
            <person name="Jaffe J.D."/>
            <person name="Stange-Thomann N."/>
            <person name="Smith C."/>
            <person name="DeCaprio D."/>
            <person name="Fisher S."/>
            <person name="Butler J."/>
            <person name="Calvo S."/>
            <person name="Elkins T."/>
            <person name="FitzGerald M.G."/>
            <person name="Hafez N."/>
            <person name="Kodira C.D."/>
            <person name="Major J."/>
            <person name="Wang S."/>
            <person name="Wilkinson J."/>
            <person name="Nicol R."/>
            <person name="Nusbaum C."/>
            <person name="Birren B."/>
            <person name="Berg H.C."/>
            <person name="Church G.M."/>
        </authorList>
    </citation>
    <scope>NUCLEOTIDE SEQUENCE [LARGE SCALE GENOMIC DNA]</scope>
    <source>
        <strain>ATCC 43663 / NCTC 11711 / 163 K</strain>
    </source>
</reference>
<accession>Q6KHR3</accession>
<evidence type="ECO:0000255" key="1">
    <source>
        <dbReference type="HAMAP-Rule" id="MF_01008"/>
    </source>
</evidence>
<evidence type="ECO:0000255" key="2">
    <source>
        <dbReference type="PROSITE-ProRule" id="PRU01076"/>
    </source>
</evidence>
<gene>
    <name evidence="1" type="primary">mraZ</name>
    <name type="ordered locus">MMOB3790</name>
</gene>
<protein>
    <recommendedName>
        <fullName>Transcriptional regulator MraZ</fullName>
    </recommendedName>
</protein>
<dbReference type="EMBL" id="AE017308">
    <property type="protein sequence ID" value="AAT27865.1"/>
    <property type="molecule type" value="Genomic_DNA"/>
</dbReference>
<dbReference type="RefSeq" id="WP_011264899.1">
    <property type="nucleotide sequence ID" value="NC_006908.1"/>
</dbReference>
<dbReference type="SMR" id="Q6KHR3"/>
<dbReference type="STRING" id="267748.MMOB3790"/>
<dbReference type="KEGG" id="mmo:MMOB3790"/>
<dbReference type="eggNOG" id="COG2001">
    <property type="taxonomic scope" value="Bacteria"/>
</dbReference>
<dbReference type="HOGENOM" id="CLU_107907_0_0_14"/>
<dbReference type="OrthoDB" id="9807753at2"/>
<dbReference type="Proteomes" id="UP000009072">
    <property type="component" value="Chromosome"/>
</dbReference>
<dbReference type="GO" id="GO:0005737">
    <property type="term" value="C:cytoplasm"/>
    <property type="evidence" value="ECO:0007669"/>
    <property type="project" value="UniProtKB-UniRule"/>
</dbReference>
<dbReference type="GO" id="GO:0009295">
    <property type="term" value="C:nucleoid"/>
    <property type="evidence" value="ECO:0007669"/>
    <property type="project" value="UniProtKB-SubCell"/>
</dbReference>
<dbReference type="GO" id="GO:0003700">
    <property type="term" value="F:DNA-binding transcription factor activity"/>
    <property type="evidence" value="ECO:0007669"/>
    <property type="project" value="UniProtKB-UniRule"/>
</dbReference>
<dbReference type="GO" id="GO:0000976">
    <property type="term" value="F:transcription cis-regulatory region binding"/>
    <property type="evidence" value="ECO:0007669"/>
    <property type="project" value="TreeGrafter"/>
</dbReference>
<dbReference type="GO" id="GO:2000143">
    <property type="term" value="P:negative regulation of DNA-templated transcription initiation"/>
    <property type="evidence" value="ECO:0007669"/>
    <property type="project" value="TreeGrafter"/>
</dbReference>
<dbReference type="CDD" id="cd16321">
    <property type="entry name" value="MraZ_C"/>
    <property type="match status" value="1"/>
</dbReference>
<dbReference type="CDD" id="cd16320">
    <property type="entry name" value="MraZ_N"/>
    <property type="match status" value="1"/>
</dbReference>
<dbReference type="Gene3D" id="3.40.1550.20">
    <property type="entry name" value="Transcriptional regulator MraZ domain"/>
    <property type="match status" value="1"/>
</dbReference>
<dbReference type="HAMAP" id="MF_01008">
    <property type="entry name" value="MraZ"/>
    <property type="match status" value="1"/>
</dbReference>
<dbReference type="InterPro" id="IPR003444">
    <property type="entry name" value="MraZ"/>
</dbReference>
<dbReference type="InterPro" id="IPR035644">
    <property type="entry name" value="MraZ_C"/>
</dbReference>
<dbReference type="InterPro" id="IPR020603">
    <property type="entry name" value="MraZ_dom"/>
</dbReference>
<dbReference type="InterPro" id="IPR035642">
    <property type="entry name" value="MraZ_N"/>
</dbReference>
<dbReference type="InterPro" id="IPR038619">
    <property type="entry name" value="MraZ_sf"/>
</dbReference>
<dbReference type="InterPro" id="IPR007159">
    <property type="entry name" value="SpoVT-AbrB_dom"/>
</dbReference>
<dbReference type="InterPro" id="IPR037914">
    <property type="entry name" value="SpoVT-AbrB_sf"/>
</dbReference>
<dbReference type="NCBIfam" id="TIGR00242">
    <property type="entry name" value="division/cell wall cluster transcriptional repressor MraZ"/>
    <property type="match status" value="1"/>
</dbReference>
<dbReference type="PANTHER" id="PTHR34701">
    <property type="entry name" value="TRANSCRIPTIONAL REGULATOR MRAZ"/>
    <property type="match status" value="1"/>
</dbReference>
<dbReference type="PANTHER" id="PTHR34701:SF1">
    <property type="entry name" value="TRANSCRIPTIONAL REGULATOR MRAZ"/>
    <property type="match status" value="1"/>
</dbReference>
<dbReference type="Pfam" id="PF02381">
    <property type="entry name" value="MraZ"/>
    <property type="match status" value="2"/>
</dbReference>
<dbReference type="SUPFAM" id="SSF89447">
    <property type="entry name" value="AbrB/MazE/MraZ-like"/>
    <property type="match status" value="1"/>
</dbReference>
<dbReference type="PROSITE" id="PS51740">
    <property type="entry name" value="SPOVT_ABRB"/>
    <property type="match status" value="2"/>
</dbReference>
<sequence length="146" mass="16916">MFGSYEKTLDSKNRLVIPSKFRDELGETFYITLGFEKSLEFRSKKSFEEFSNKISSNNLLDSKMRELSRYIFANTIEVSSDKLGRVIILDNLLKKAEIEKDAVIVGVGNKAELWSKEKFEKITNIYENEENIKKLTQELFEKGAVL</sequence>
<proteinExistence type="inferred from homology"/>
<feature type="chain" id="PRO_0000108505" description="Transcriptional regulator MraZ">
    <location>
        <begin position="1"/>
        <end position="146"/>
    </location>
</feature>
<feature type="domain" description="SpoVT-AbrB 1" evidence="2">
    <location>
        <begin position="4"/>
        <end position="46"/>
    </location>
</feature>
<feature type="domain" description="SpoVT-AbrB 2" evidence="2">
    <location>
        <begin position="75"/>
        <end position="118"/>
    </location>
</feature>
<keyword id="KW-0963">Cytoplasm</keyword>
<keyword id="KW-0238">DNA-binding</keyword>
<keyword id="KW-1185">Reference proteome</keyword>
<keyword id="KW-0677">Repeat</keyword>
<keyword id="KW-0804">Transcription</keyword>
<keyword id="KW-0805">Transcription regulation</keyword>
<name>MRAZ_MYCM1</name>
<comment type="subunit">
    <text evidence="1">Forms oligomers.</text>
</comment>
<comment type="subcellular location">
    <subcellularLocation>
        <location evidence="1">Cytoplasm</location>
        <location evidence="1">Nucleoid</location>
    </subcellularLocation>
</comment>
<comment type="similarity">
    <text evidence="1">Belongs to the MraZ family.</text>
</comment>
<organism>
    <name type="scientific">Mycoplasma mobile (strain ATCC 43663 / 163K / NCTC 11711)</name>
    <name type="common">Mesomycoplasma mobile</name>
    <dbReference type="NCBI Taxonomy" id="267748"/>
    <lineage>
        <taxon>Bacteria</taxon>
        <taxon>Bacillati</taxon>
        <taxon>Mycoplasmatota</taxon>
        <taxon>Mycoplasmoidales</taxon>
        <taxon>Metamycoplasmataceae</taxon>
        <taxon>Mesomycoplasma</taxon>
    </lineage>
</organism>